<gene>
    <name evidence="1" type="primary">nfo</name>
    <name type="synonym">xthA2</name>
    <name type="ordered locus">SAV_6091</name>
</gene>
<comment type="function">
    <text evidence="1">Endonuclease IV plays a role in DNA repair. It cleaves phosphodiester bonds at apurinic or apyrimidinic (AP) sites, generating a 3'-hydroxyl group and a 5'-terminal sugar phosphate.</text>
</comment>
<comment type="catalytic activity">
    <reaction evidence="1">
        <text>Endonucleolytic cleavage to 5'-phosphooligonucleotide end-products.</text>
        <dbReference type="EC" id="3.1.21.2"/>
    </reaction>
</comment>
<comment type="cofactor">
    <cofactor evidence="1">
        <name>Zn(2+)</name>
        <dbReference type="ChEBI" id="CHEBI:29105"/>
    </cofactor>
    <text evidence="1">Binds 3 Zn(2+) ions.</text>
</comment>
<comment type="similarity">
    <text evidence="1">Belongs to the AP endonuclease 2 family.</text>
</comment>
<evidence type="ECO:0000255" key="1">
    <source>
        <dbReference type="HAMAP-Rule" id="MF_00152"/>
    </source>
</evidence>
<evidence type="ECO:0000256" key="2">
    <source>
        <dbReference type="SAM" id="MobiDB-lite"/>
    </source>
</evidence>
<name>END4_STRAW</name>
<reference key="1">
    <citation type="journal article" date="2001" name="Proc. Natl. Acad. Sci. U.S.A.">
        <title>Genome sequence of an industrial microorganism Streptomyces avermitilis: deducing the ability of producing secondary metabolites.</title>
        <authorList>
            <person name="Omura S."/>
            <person name="Ikeda H."/>
            <person name="Ishikawa J."/>
            <person name="Hanamoto A."/>
            <person name="Takahashi C."/>
            <person name="Shinose M."/>
            <person name="Takahashi Y."/>
            <person name="Horikawa H."/>
            <person name="Nakazawa H."/>
            <person name="Osonoe T."/>
            <person name="Kikuchi H."/>
            <person name="Shiba T."/>
            <person name="Sakaki Y."/>
            <person name="Hattori M."/>
        </authorList>
    </citation>
    <scope>NUCLEOTIDE SEQUENCE [LARGE SCALE GENOMIC DNA]</scope>
    <source>
        <strain>ATCC 31267 / DSM 46492 / JCM 5070 / NBRC 14893 / NCIMB 12804 / NRRL 8165 / MA-4680</strain>
    </source>
</reference>
<reference key="2">
    <citation type="journal article" date="2003" name="Nat. Biotechnol.">
        <title>Complete genome sequence and comparative analysis of the industrial microorganism Streptomyces avermitilis.</title>
        <authorList>
            <person name="Ikeda H."/>
            <person name="Ishikawa J."/>
            <person name="Hanamoto A."/>
            <person name="Shinose M."/>
            <person name="Kikuchi H."/>
            <person name="Shiba T."/>
            <person name="Sakaki Y."/>
            <person name="Hattori M."/>
            <person name="Omura S."/>
        </authorList>
    </citation>
    <scope>NUCLEOTIDE SEQUENCE [LARGE SCALE GENOMIC DNA]</scope>
    <source>
        <strain>ATCC 31267 / DSM 46492 / JCM 5070 / NBRC 14893 / NCIMB 12804 / NRRL 8165 / MA-4680</strain>
    </source>
</reference>
<sequence>MNNQQSRGALGTSGATPDLPDATPGLSRNPVGGHVPVAGGLHSVGLAYARDLAAEAVQVFVANPRGWATPAGNPRQDEEFRAACAAESIPAYVHAPYLINFGSHTEATVEKSVESLRHSLRRGREIGALGVVVHTGSATGGRERSVALAQVREHLLPLLDELTHDDDPYLLLESTAGQGASLCSRTWDFGPYFEALDAHPKLGVCLDTCHIFAAGHDLTGPSGMHQTLDLLVDTVGEGRLKLIHANDSKDVVGAHKDRHENIGSGHIGEDPFRALMTHPATEGVPLIIETPGGKEGHAADVEQLKKLRDG</sequence>
<protein>
    <recommendedName>
        <fullName evidence="1">Probable endonuclease 4</fullName>
        <ecNumber evidence="1">3.1.21.2</ecNumber>
    </recommendedName>
    <alternativeName>
        <fullName evidence="1">Endodeoxyribonuclease IV</fullName>
    </alternativeName>
    <alternativeName>
        <fullName evidence="1">Endonuclease IV</fullName>
    </alternativeName>
</protein>
<accession>Q82AG6</accession>
<proteinExistence type="inferred from homology"/>
<keyword id="KW-0227">DNA damage</keyword>
<keyword id="KW-0234">DNA repair</keyword>
<keyword id="KW-0255">Endonuclease</keyword>
<keyword id="KW-0378">Hydrolase</keyword>
<keyword id="KW-0479">Metal-binding</keyword>
<keyword id="KW-0540">Nuclease</keyword>
<keyword id="KW-1185">Reference proteome</keyword>
<keyword id="KW-0862">Zinc</keyword>
<organism>
    <name type="scientific">Streptomyces avermitilis (strain ATCC 31267 / DSM 46492 / JCM 5070 / NBRC 14893 / NCIMB 12804 / NRRL 8165 / MA-4680)</name>
    <dbReference type="NCBI Taxonomy" id="227882"/>
    <lineage>
        <taxon>Bacteria</taxon>
        <taxon>Bacillati</taxon>
        <taxon>Actinomycetota</taxon>
        <taxon>Actinomycetes</taxon>
        <taxon>Kitasatosporales</taxon>
        <taxon>Streptomycetaceae</taxon>
        <taxon>Streptomyces</taxon>
    </lineage>
</organism>
<dbReference type="EC" id="3.1.21.2" evidence="1"/>
<dbReference type="EMBL" id="BA000030">
    <property type="protein sequence ID" value="BAC73802.1"/>
    <property type="molecule type" value="Genomic_DNA"/>
</dbReference>
<dbReference type="SMR" id="Q82AG6"/>
<dbReference type="KEGG" id="sma:SAVERM_6091"/>
<dbReference type="eggNOG" id="COG0648">
    <property type="taxonomic scope" value="Bacteria"/>
</dbReference>
<dbReference type="HOGENOM" id="CLU_025885_0_1_11"/>
<dbReference type="Proteomes" id="UP000000428">
    <property type="component" value="Chromosome"/>
</dbReference>
<dbReference type="GO" id="GO:0008833">
    <property type="term" value="F:deoxyribonuclease IV (phage-T4-induced) activity"/>
    <property type="evidence" value="ECO:0007669"/>
    <property type="project" value="UniProtKB-UniRule"/>
</dbReference>
<dbReference type="GO" id="GO:0003677">
    <property type="term" value="F:DNA binding"/>
    <property type="evidence" value="ECO:0007669"/>
    <property type="project" value="InterPro"/>
</dbReference>
<dbReference type="GO" id="GO:0003906">
    <property type="term" value="F:DNA-(apurinic or apyrimidinic site) endonuclease activity"/>
    <property type="evidence" value="ECO:0007669"/>
    <property type="project" value="TreeGrafter"/>
</dbReference>
<dbReference type="GO" id="GO:0008081">
    <property type="term" value="F:phosphoric diester hydrolase activity"/>
    <property type="evidence" value="ECO:0007669"/>
    <property type="project" value="TreeGrafter"/>
</dbReference>
<dbReference type="GO" id="GO:0008270">
    <property type="term" value="F:zinc ion binding"/>
    <property type="evidence" value="ECO:0007669"/>
    <property type="project" value="UniProtKB-UniRule"/>
</dbReference>
<dbReference type="GO" id="GO:0006284">
    <property type="term" value="P:base-excision repair"/>
    <property type="evidence" value="ECO:0007669"/>
    <property type="project" value="TreeGrafter"/>
</dbReference>
<dbReference type="CDD" id="cd00019">
    <property type="entry name" value="AP2Ec"/>
    <property type="match status" value="1"/>
</dbReference>
<dbReference type="Gene3D" id="3.20.20.150">
    <property type="entry name" value="Divalent-metal-dependent TIM barrel enzymes"/>
    <property type="match status" value="1"/>
</dbReference>
<dbReference type="HAMAP" id="MF_00152">
    <property type="entry name" value="Nfo"/>
    <property type="match status" value="1"/>
</dbReference>
<dbReference type="InterPro" id="IPR001719">
    <property type="entry name" value="AP_endonuc_2"/>
</dbReference>
<dbReference type="InterPro" id="IPR018246">
    <property type="entry name" value="AP_endonuc_F2_Zn_BS"/>
</dbReference>
<dbReference type="InterPro" id="IPR036237">
    <property type="entry name" value="Xyl_isomerase-like_sf"/>
</dbReference>
<dbReference type="InterPro" id="IPR013022">
    <property type="entry name" value="Xyl_isomerase-like_TIM-brl"/>
</dbReference>
<dbReference type="NCBIfam" id="TIGR00587">
    <property type="entry name" value="nfo"/>
    <property type="match status" value="1"/>
</dbReference>
<dbReference type="PANTHER" id="PTHR21445:SF0">
    <property type="entry name" value="APURINIC-APYRIMIDINIC ENDONUCLEASE"/>
    <property type="match status" value="1"/>
</dbReference>
<dbReference type="PANTHER" id="PTHR21445">
    <property type="entry name" value="ENDONUCLEASE IV ENDODEOXYRIBONUCLEASE IV"/>
    <property type="match status" value="1"/>
</dbReference>
<dbReference type="Pfam" id="PF01261">
    <property type="entry name" value="AP_endonuc_2"/>
    <property type="match status" value="1"/>
</dbReference>
<dbReference type="SMART" id="SM00518">
    <property type="entry name" value="AP2Ec"/>
    <property type="match status" value="1"/>
</dbReference>
<dbReference type="SUPFAM" id="SSF51658">
    <property type="entry name" value="Xylose isomerase-like"/>
    <property type="match status" value="1"/>
</dbReference>
<dbReference type="PROSITE" id="PS00729">
    <property type="entry name" value="AP_NUCLEASE_F2_1"/>
    <property type="match status" value="1"/>
</dbReference>
<dbReference type="PROSITE" id="PS00730">
    <property type="entry name" value="AP_NUCLEASE_F2_2"/>
    <property type="match status" value="1"/>
</dbReference>
<dbReference type="PROSITE" id="PS00731">
    <property type="entry name" value="AP_NUCLEASE_F2_3"/>
    <property type="match status" value="1"/>
</dbReference>
<dbReference type="PROSITE" id="PS51432">
    <property type="entry name" value="AP_NUCLEASE_F2_4"/>
    <property type="match status" value="1"/>
</dbReference>
<feature type="chain" id="PRO_0000190877" description="Probable endonuclease 4">
    <location>
        <begin position="1"/>
        <end position="310"/>
    </location>
</feature>
<feature type="region of interest" description="Disordered" evidence="2">
    <location>
        <begin position="1"/>
        <end position="31"/>
    </location>
</feature>
<feature type="binding site" evidence="1">
    <location>
        <position position="94"/>
    </location>
    <ligand>
        <name>Zn(2+)</name>
        <dbReference type="ChEBI" id="CHEBI:29105"/>
        <label>1</label>
    </ligand>
</feature>
<feature type="binding site" evidence="1">
    <location>
        <position position="134"/>
    </location>
    <ligand>
        <name>Zn(2+)</name>
        <dbReference type="ChEBI" id="CHEBI:29105"/>
        <label>1</label>
    </ligand>
</feature>
<feature type="binding site" evidence="1">
    <location>
        <position position="173"/>
    </location>
    <ligand>
        <name>Zn(2+)</name>
        <dbReference type="ChEBI" id="CHEBI:29105"/>
        <label>1</label>
    </ligand>
</feature>
<feature type="binding site" evidence="1">
    <location>
        <position position="173"/>
    </location>
    <ligand>
        <name>Zn(2+)</name>
        <dbReference type="ChEBI" id="CHEBI:29105"/>
        <label>2</label>
    </ligand>
</feature>
<feature type="binding site" evidence="1">
    <location>
        <position position="207"/>
    </location>
    <ligand>
        <name>Zn(2+)</name>
        <dbReference type="ChEBI" id="CHEBI:29105"/>
        <label>2</label>
    </ligand>
</feature>
<feature type="binding site" evidence="1">
    <location>
        <position position="210"/>
    </location>
    <ligand>
        <name>Zn(2+)</name>
        <dbReference type="ChEBI" id="CHEBI:29105"/>
        <label>3</label>
    </ligand>
</feature>
<feature type="binding site" evidence="1">
    <location>
        <position position="244"/>
    </location>
    <ligand>
        <name>Zn(2+)</name>
        <dbReference type="ChEBI" id="CHEBI:29105"/>
        <label>2</label>
    </ligand>
</feature>
<feature type="binding site" evidence="1">
    <location>
        <position position="257"/>
    </location>
    <ligand>
        <name>Zn(2+)</name>
        <dbReference type="ChEBI" id="CHEBI:29105"/>
        <label>3</label>
    </ligand>
</feature>
<feature type="binding site" evidence="1">
    <location>
        <position position="259"/>
    </location>
    <ligand>
        <name>Zn(2+)</name>
        <dbReference type="ChEBI" id="CHEBI:29105"/>
        <label>3</label>
    </ligand>
</feature>
<feature type="binding site" evidence="1">
    <location>
        <position position="289"/>
    </location>
    <ligand>
        <name>Zn(2+)</name>
        <dbReference type="ChEBI" id="CHEBI:29105"/>
        <label>2</label>
    </ligand>
</feature>